<comment type="function">
    <text evidence="1">Catalyzes the phosphorylation of the hydroxyl group of 4-methyl-5-beta-hydroxyethylthiazole (THZ).</text>
</comment>
<comment type="catalytic activity">
    <reaction evidence="1">
        <text>5-(2-hydroxyethyl)-4-methylthiazole + ATP = 4-methyl-5-(2-phosphooxyethyl)-thiazole + ADP + H(+)</text>
        <dbReference type="Rhea" id="RHEA:24212"/>
        <dbReference type="ChEBI" id="CHEBI:15378"/>
        <dbReference type="ChEBI" id="CHEBI:17957"/>
        <dbReference type="ChEBI" id="CHEBI:30616"/>
        <dbReference type="ChEBI" id="CHEBI:58296"/>
        <dbReference type="ChEBI" id="CHEBI:456216"/>
        <dbReference type="EC" id="2.7.1.50"/>
    </reaction>
</comment>
<comment type="cofactor">
    <cofactor evidence="1">
        <name>Mg(2+)</name>
        <dbReference type="ChEBI" id="CHEBI:18420"/>
    </cofactor>
</comment>
<comment type="pathway">
    <text evidence="1">Cofactor biosynthesis; thiamine diphosphate biosynthesis; 4-methyl-5-(2-phosphoethyl)-thiazole from 5-(2-hydroxyethyl)-4-methylthiazole: step 1/1.</text>
</comment>
<comment type="similarity">
    <text evidence="1">Belongs to the Thz kinase family.</text>
</comment>
<protein>
    <recommendedName>
        <fullName evidence="1">Hydroxyethylthiazole kinase</fullName>
        <ecNumber evidence="1">2.7.1.50</ecNumber>
    </recommendedName>
    <alternativeName>
        <fullName evidence="1">4-methyl-5-beta-hydroxyethylthiazole kinase</fullName>
        <shortName evidence="1">TH kinase</shortName>
        <shortName evidence="1">Thz kinase</shortName>
    </alternativeName>
</protein>
<reference key="1">
    <citation type="submission" date="2007-06" db="EMBL/GenBank/DDBJ databases">
        <title>Complete sequence of Methanococcus vannielii SB.</title>
        <authorList>
            <consortium name="US DOE Joint Genome Institute"/>
            <person name="Copeland A."/>
            <person name="Lucas S."/>
            <person name="Lapidus A."/>
            <person name="Barry K."/>
            <person name="Glavina del Rio T."/>
            <person name="Dalin E."/>
            <person name="Tice H."/>
            <person name="Pitluck S."/>
            <person name="Chain P."/>
            <person name="Malfatti S."/>
            <person name="Shin M."/>
            <person name="Vergez L."/>
            <person name="Schmutz J."/>
            <person name="Larimer F."/>
            <person name="Land M."/>
            <person name="Hauser L."/>
            <person name="Kyrpides N."/>
            <person name="Anderson I."/>
            <person name="Sieprawska-Lupa M."/>
            <person name="Whitman W.B."/>
            <person name="Richardson P."/>
        </authorList>
    </citation>
    <scope>NUCLEOTIDE SEQUENCE [LARGE SCALE GENOMIC DNA]</scope>
    <source>
        <strain>ATCC 35089 / DSM 1224 / JCM 13029 / OCM 148 / SB</strain>
    </source>
</reference>
<evidence type="ECO:0000255" key="1">
    <source>
        <dbReference type="HAMAP-Rule" id="MF_00228"/>
    </source>
</evidence>
<name>THIM_METVS</name>
<gene>
    <name evidence="1" type="primary">thiM</name>
    <name type="ordered locus">Mevan_0460</name>
</gene>
<keyword id="KW-0067">ATP-binding</keyword>
<keyword id="KW-0418">Kinase</keyword>
<keyword id="KW-0460">Magnesium</keyword>
<keyword id="KW-0479">Metal-binding</keyword>
<keyword id="KW-0547">Nucleotide-binding</keyword>
<keyword id="KW-0784">Thiamine biosynthesis</keyword>
<keyword id="KW-0808">Transferase</keyword>
<sequence length="266" mass="28697">MKFIAENLTKLRTISPLVQNITNYVVMNSTANTLLALGASPVMAHAKEELEEMIAISSALVVNIGTLDEYWIPSMEKAVKIASDLKKPIILDPVGAGATKLRTNTALKLLDIGNVSVLRGNFGEISALLGEHGKTKGVDSAVYDNNEALNISKNASKEFNTVSTVTGPIDYVSNGKEIYSISNGHEMLSKVTGTGCASTSIIGAFLAVEEPLKASVSGLVTYGISAEMAFEESFYPGTFQAKLYDWLYRIDEKLILEKAKVNRIDI</sequence>
<proteinExistence type="inferred from homology"/>
<organism>
    <name type="scientific">Methanococcus vannielii (strain ATCC 35089 / DSM 1224 / JCM 13029 / OCM 148 / SB)</name>
    <dbReference type="NCBI Taxonomy" id="406327"/>
    <lineage>
        <taxon>Archaea</taxon>
        <taxon>Methanobacteriati</taxon>
        <taxon>Methanobacteriota</taxon>
        <taxon>Methanomada group</taxon>
        <taxon>Methanococci</taxon>
        <taxon>Methanococcales</taxon>
        <taxon>Methanococcaceae</taxon>
        <taxon>Methanococcus</taxon>
    </lineage>
</organism>
<dbReference type="EC" id="2.7.1.50" evidence="1"/>
<dbReference type="EMBL" id="CP000742">
    <property type="protein sequence ID" value="ABR54367.1"/>
    <property type="molecule type" value="Genomic_DNA"/>
</dbReference>
<dbReference type="RefSeq" id="WP_011972270.1">
    <property type="nucleotide sequence ID" value="NC_009634.1"/>
</dbReference>
<dbReference type="SMR" id="A6UPE5"/>
<dbReference type="STRING" id="406327.Mevan_0460"/>
<dbReference type="GeneID" id="5325363"/>
<dbReference type="KEGG" id="mvn:Mevan_0460"/>
<dbReference type="eggNOG" id="arCOG00019">
    <property type="taxonomic scope" value="Archaea"/>
</dbReference>
<dbReference type="HOGENOM" id="CLU_019943_0_0_2"/>
<dbReference type="OrthoDB" id="214286at2157"/>
<dbReference type="UniPathway" id="UPA00060">
    <property type="reaction ID" value="UER00139"/>
</dbReference>
<dbReference type="Proteomes" id="UP000001107">
    <property type="component" value="Chromosome"/>
</dbReference>
<dbReference type="GO" id="GO:0005524">
    <property type="term" value="F:ATP binding"/>
    <property type="evidence" value="ECO:0007669"/>
    <property type="project" value="UniProtKB-UniRule"/>
</dbReference>
<dbReference type="GO" id="GO:0004417">
    <property type="term" value="F:hydroxyethylthiazole kinase activity"/>
    <property type="evidence" value="ECO:0007669"/>
    <property type="project" value="UniProtKB-UniRule"/>
</dbReference>
<dbReference type="GO" id="GO:0000287">
    <property type="term" value="F:magnesium ion binding"/>
    <property type="evidence" value="ECO:0007669"/>
    <property type="project" value="UniProtKB-UniRule"/>
</dbReference>
<dbReference type="GO" id="GO:0009228">
    <property type="term" value="P:thiamine biosynthetic process"/>
    <property type="evidence" value="ECO:0007669"/>
    <property type="project" value="UniProtKB-KW"/>
</dbReference>
<dbReference type="GO" id="GO:0009229">
    <property type="term" value="P:thiamine diphosphate biosynthetic process"/>
    <property type="evidence" value="ECO:0007669"/>
    <property type="project" value="UniProtKB-UniRule"/>
</dbReference>
<dbReference type="CDD" id="cd01170">
    <property type="entry name" value="THZ_kinase"/>
    <property type="match status" value="1"/>
</dbReference>
<dbReference type="Gene3D" id="3.40.1190.20">
    <property type="match status" value="1"/>
</dbReference>
<dbReference type="HAMAP" id="MF_00228">
    <property type="entry name" value="Thz_kinase"/>
    <property type="match status" value="1"/>
</dbReference>
<dbReference type="InterPro" id="IPR000417">
    <property type="entry name" value="Hyethyz_kinase"/>
</dbReference>
<dbReference type="InterPro" id="IPR029056">
    <property type="entry name" value="Ribokinase-like"/>
</dbReference>
<dbReference type="NCBIfam" id="NF006830">
    <property type="entry name" value="PRK09355.1"/>
    <property type="match status" value="1"/>
</dbReference>
<dbReference type="NCBIfam" id="TIGR00694">
    <property type="entry name" value="thiM"/>
    <property type="match status" value="1"/>
</dbReference>
<dbReference type="Pfam" id="PF02110">
    <property type="entry name" value="HK"/>
    <property type="match status" value="1"/>
</dbReference>
<dbReference type="PIRSF" id="PIRSF000513">
    <property type="entry name" value="Thz_kinase"/>
    <property type="match status" value="1"/>
</dbReference>
<dbReference type="PRINTS" id="PR01099">
    <property type="entry name" value="HYETHTZKNASE"/>
</dbReference>
<dbReference type="SUPFAM" id="SSF53613">
    <property type="entry name" value="Ribokinase-like"/>
    <property type="match status" value="1"/>
</dbReference>
<accession>A6UPE5</accession>
<feature type="chain" id="PRO_1000021522" description="Hydroxyethylthiazole kinase">
    <location>
        <begin position="1"/>
        <end position="266"/>
    </location>
</feature>
<feature type="binding site" evidence="1">
    <location>
        <position position="43"/>
    </location>
    <ligand>
        <name>substrate</name>
    </ligand>
</feature>
<feature type="binding site" evidence="1">
    <location>
        <position position="119"/>
    </location>
    <ligand>
        <name>ATP</name>
        <dbReference type="ChEBI" id="CHEBI:30616"/>
    </ligand>
</feature>
<feature type="binding site" evidence="1">
    <location>
        <position position="166"/>
    </location>
    <ligand>
        <name>ATP</name>
        <dbReference type="ChEBI" id="CHEBI:30616"/>
    </ligand>
</feature>
<feature type="binding site" evidence="1">
    <location>
        <position position="193"/>
    </location>
    <ligand>
        <name>substrate</name>
    </ligand>
</feature>